<proteinExistence type="inferred from homology"/>
<geneLocation type="chloroplast"/>
<dbReference type="EC" id="7.1.2.2" evidence="1"/>
<dbReference type="EMBL" id="EU431223">
    <property type="protein sequence ID" value="ABY86789.1"/>
    <property type="molecule type" value="Genomic_DNA"/>
</dbReference>
<dbReference type="RefSeq" id="YP_001671690.1">
    <property type="nucleotide sequence ID" value="NC_010323.1"/>
</dbReference>
<dbReference type="SMR" id="B1A942"/>
<dbReference type="GeneID" id="5878376"/>
<dbReference type="KEGG" id="cpap:5878376"/>
<dbReference type="OrthoDB" id="1562023at2759"/>
<dbReference type="GO" id="GO:0009535">
    <property type="term" value="C:chloroplast thylakoid membrane"/>
    <property type="evidence" value="ECO:0007669"/>
    <property type="project" value="UniProtKB-SubCell"/>
</dbReference>
<dbReference type="GO" id="GO:0005739">
    <property type="term" value="C:mitochondrion"/>
    <property type="evidence" value="ECO:0007669"/>
    <property type="project" value="GOC"/>
</dbReference>
<dbReference type="GO" id="GO:0045259">
    <property type="term" value="C:proton-transporting ATP synthase complex"/>
    <property type="evidence" value="ECO:0007669"/>
    <property type="project" value="UniProtKB-KW"/>
</dbReference>
<dbReference type="GO" id="GO:0005524">
    <property type="term" value="F:ATP binding"/>
    <property type="evidence" value="ECO:0007669"/>
    <property type="project" value="UniProtKB-UniRule"/>
</dbReference>
<dbReference type="GO" id="GO:0016887">
    <property type="term" value="F:ATP hydrolysis activity"/>
    <property type="evidence" value="ECO:0007669"/>
    <property type="project" value="InterPro"/>
</dbReference>
<dbReference type="GO" id="GO:0046933">
    <property type="term" value="F:proton-transporting ATP synthase activity, rotational mechanism"/>
    <property type="evidence" value="ECO:0007669"/>
    <property type="project" value="UniProtKB-UniRule"/>
</dbReference>
<dbReference type="GO" id="GO:0042776">
    <property type="term" value="P:proton motive force-driven mitochondrial ATP synthesis"/>
    <property type="evidence" value="ECO:0007669"/>
    <property type="project" value="TreeGrafter"/>
</dbReference>
<dbReference type="CDD" id="cd18110">
    <property type="entry name" value="ATP-synt_F1_beta_C"/>
    <property type="match status" value="1"/>
</dbReference>
<dbReference type="CDD" id="cd18115">
    <property type="entry name" value="ATP-synt_F1_beta_N"/>
    <property type="match status" value="1"/>
</dbReference>
<dbReference type="CDD" id="cd01133">
    <property type="entry name" value="F1-ATPase_beta_CD"/>
    <property type="match status" value="1"/>
</dbReference>
<dbReference type="FunFam" id="1.10.1140.10:FF:000001">
    <property type="entry name" value="ATP synthase subunit beta"/>
    <property type="match status" value="1"/>
</dbReference>
<dbReference type="FunFam" id="3.40.50.12240:FF:000006">
    <property type="entry name" value="ATP synthase subunit beta"/>
    <property type="match status" value="1"/>
</dbReference>
<dbReference type="FunFam" id="3.40.50.300:FF:000004">
    <property type="entry name" value="ATP synthase subunit beta"/>
    <property type="match status" value="1"/>
</dbReference>
<dbReference type="FunFam" id="2.40.10.170:FF:000002">
    <property type="entry name" value="ATP synthase subunit beta, chloroplastic"/>
    <property type="match status" value="1"/>
</dbReference>
<dbReference type="Gene3D" id="2.40.10.170">
    <property type="match status" value="1"/>
</dbReference>
<dbReference type="Gene3D" id="1.10.1140.10">
    <property type="entry name" value="Bovine Mitochondrial F1-atpase, Atp Synthase Beta Chain, Chain D, domain 3"/>
    <property type="match status" value="1"/>
</dbReference>
<dbReference type="Gene3D" id="3.40.50.300">
    <property type="entry name" value="P-loop containing nucleotide triphosphate hydrolases"/>
    <property type="match status" value="1"/>
</dbReference>
<dbReference type="HAMAP" id="MF_01347">
    <property type="entry name" value="ATP_synth_beta_bact"/>
    <property type="match status" value="1"/>
</dbReference>
<dbReference type="InterPro" id="IPR003593">
    <property type="entry name" value="AAA+_ATPase"/>
</dbReference>
<dbReference type="InterPro" id="IPR055190">
    <property type="entry name" value="ATP-synt_VA_C"/>
</dbReference>
<dbReference type="InterPro" id="IPR005722">
    <property type="entry name" value="ATP_synth_F1_bsu"/>
</dbReference>
<dbReference type="InterPro" id="IPR020003">
    <property type="entry name" value="ATPase_a/bsu_AS"/>
</dbReference>
<dbReference type="InterPro" id="IPR050053">
    <property type="entry name" value="ATPase_alpha/beta_chains"/>
</dbReference>
<dbReference type="InterPro" id="IPR004100">
    <property type="entry name" value="ATPase_F1/V1/A1_a/bsu_N"/>
</dbReference>
<dbReference type="InterPro" id="IPR036121">
    <property type="entry name" value="ATPase_F1/V1/A1_a/bsu_N_sf"/>
</dbReference>
<dbReference type="InterPro" id="IPR000194">
    <property type="entry name" value="ATPase_F1/V1/A1_a/bsu_nucl-bd"/>
</dbReference>
<dbReference type="InterPro" id="IPR024034">
    <property type="entry name" value="ATPase_F1/V1_b/a_C"/>
</dbReference>
<dbReference type="InterPro" id="IPR027417">
    <property type="entry name" value="P-loop_NTPase"/>
</dbReference>
<dbReference type="NCBIfam" id="TIGR01039">
    <property type="entry name" value="atpD"/>
    <property type="match status" value="1"/>
</dbReference>
<dbReference type="PANTHER" id="PTHR15184">
    <property type="entry name" value="ATP SYNTHASE"/>
    <property type="match status" value="1"/>
</dbReference>
<dbReference type="PANTHER" id="PTHR15184:SF71">
    <property type="entry name" value="ATP SYNTHASE SUBUNIT BETA, MITOCHONDRIAL"/>
    <property type="match status" value="1"/>
</dbReference>
<dbReference type="Pfam" id="PF00006">
    <property type="entry name" value="ATP-synt_ab"/>
    <property type="match status" value="1"/>
</dbReference>
<dbReference type="Pfam" id="PF02874">
    <property type="entry name" value="ATP-synt_ab_N"/>
    <property type="match status" value="1"/>
</dbReference>
<dbReference type="Pfam" id="PF22919">
    <property type="entry name" value="ATP-synt_VA_C"/>
    <property type="match status" value="1"/>
</dbReference>
<dbReference type="SMART" id="SM00382">
    <property type="entry name" value="AAA"/>
    <property type="match status" value="1"/>
</dbReference>
<dbReference type="SUPFAM" id="SSF47917">
    <property type="entry name" value="C-terminal domain of alpha and beta subunits of F1 ATP synthase"/>
    <property type="match status" value="1"/>
</dbReference>
<dbReference type="SUPFAM" id="SSF50615">
    <property type="entry name" value="N-terminal domain of alpha and beta subunits of F1 ATP synthase"/>
    <property type="match status" value="1"/>
</dbReference>
<dbReference type="SUPFAM" id="SSF52540">
    <property type="entry name" value="P-loop containing nucleoside triphosphate hydrolases"/>
    <property type="match status" value="1"/>
</dbReference>
<dbReference type="PROSITE" id="PS00152">
    <property type="entry name" value="ATPASE_ALPHA_BETA"/>
    <property type="match status" value="1"/>
</dbReference>
<organism>
    <name type="scientific">Carica papaya</name>
    <name type="common">Papaya</name>
    <dbReference type="NCBI Taxonomy" id="3649"/>
    <lineage>
        <taxon>Eukaryota</taxon>
        <taxon>Viridiplantae</taxon>
        <taxon>Streptophyta</taxon>
        <taxon>Embryophyta</taxon>
        <taxon>Tracheophyta</taxon>
        <taxon>Spermatophyta</taxon>
        <taxon>Magnoliopsida</taxon>
        <taxon>eudicotyledons</taxon>
        <taxon>Gunneridae</taxon>
        <taxon>Pentapetalae</taxon>
        <taxon>rosids</taxon>
        <taxon>malvids</taxon>
        <taxon>Brassicales</taxon>
        <taxon>Caricaceae</taxon>
        <taxon>Carica</taxon>
    </lineage>
</organism>
<name>ATPB_CARPA</name>
<keyword id="KW-0066">ATP synthesis</keyword>
<keyword id="KW-0067">ATP-binding</keyword>
<keyword id="KW-0139">CF(1)</keyword>
<keyword id="KW-0150">Chloroplast</keyword>
<keyword id="KW-0375">Hydrogen ion transport</keyword>
<keyword id="KW-0406">Ion transport</keyword>
<keyword id="KW-0472">Membrane</keyword>
<keyword id="KW-0547">Nucleotide-binding</keyword>
<keyword id="KW-0934">Plastid</keyword>
<keyword id="KW-0793">Thylakoid</keyword>
<keyword id="KW-1278">Translocase</keyword>
<keyword id="KW-0813">Transport</keyword>
<feature type="chain" id="PRO_0000339610" description="ATP synthase subunit beta, chloroplastic">
    <location>
        <begin position="1"/>
        <end position="498"/>
    </location>
</feature>
<feature type="binding site" evidence="1">
    <location>
        <begin position="172"/>
        <end position="179"/>
    </location>
    <ligand>
        <name>ATP</name>
        <dbReference type="ChEBI" id="CHEBI:30616"/>
    </ligand>
</feature>
<gene>
    <name evidence="1" type="primary">atpB</name>
</gene>
<evidence type="ECO:0000255" key="1">
    <source>
        <dbReference type="HAMAP-Rule" id="MF_01347"/>
    </source>
</evidence>
<accession>B1A942</accession>
<sequence length="498" mass="53643">MRINPTASGPGVSTLEKKNLGRIAQIIGPVLDVAFPPGKMPNIYNALVVKGRDTVGQQINVTCEVQQLLGNNRVRAVAMSATDGLTRGMEVIDTGAPLSVPVGGATLGRIFNVLGEPVDNLGPVDTRTTSPIHKSAPAFIQLDTKFSIFETGIKVVDLLAPYRRGGKIGLFGGAGVGKTVLIMELINNIAKAHGGVSVFGGVGERTREGNDLYMEMKESGVINEQNLAESKVALVYGQMNEPPGARMRVGLTALTMAEYFRDVNEQDVLLFIDNIFRFVQAGSEVSALLGRMPSAVGYQPTLSTEMGSLQERITSTKEGSITSIQAVYVPADDLTDPAPATTFAHLDATTVLSRGLAAKGIYPAVDPLDSTSTMLQPRIVGEEHYETAQRVKQTLQRYKELQDIIAILGLDELSEEDRLTVARARKIERFLSQPFFVAEVFTGSPGKYVGLAETIRGFKLILSGELDGLPEQAFYLVGNIDEATAKATQLEMESKLKK</sequence>
<reference key="1">
    <citation type="journal article" date="2008" name="Nature">
        <title>The draft genome of the transgenic tropical fruit tree papaya (Carica papaya Linnaeus).</title>
        <authorList>
            <person name="Ming R."/>
            <person name="Hou S."/>
            <person name="Feng Y."/>
            <person name="Yu Q."/>
            <person name="Dionne-Laporte A."/>
            <person name="Saw J.H."/>
            <person name="Senin P."/>
            <person name="Wang W."/>
            <person name="Ly B.V."/>
            <person name="Lewis K.L."/>
            <person name="Salzberg S.L."/>
            <person name="Feng L."/>
            <person name="Jones M.R."/>
            <person name="Skelton R.L."/>
            <person name="Murray J.E."/>
            <person name="Chen C."/>
            <person name="Qian W."/>
            <person name="Shen J."/>
            <person name="Du P."/>
            <person name="Eustice M."/>
            <person name="Tong E."/>
            <person name="Tang H."/>
            <person name="Lyons E."/>
            <person name="Paull R.E."/>
            <person name="Michael T.P."/>
            <person name="Wall K."/>
            <person name="Rice D.W."/>
            <person name="Albert H."/>
            <person name="Wang M.L."/>
            <person name="Zhu Y.J."/>
            <person name="Schatz M."/>
            <person name="Nagarajan N."/>
            <person name="Acob R.A."/>
            <person name="Guan P."/>
            <person name="Blas A."/>
            <person name="Wai C.M."/>
            <person name="Ackerman C.M."/>
            <person name="Ren Y."/>
            <person name="Liu C."/>
            <person name="Wang J."/>
            <person name="Wang J."/>
            <person name="Na J.K."/>
            <person name="Shakirov E.V."/>
            <person name="Haas B."/>
            <person name="Thimmapuram J."/>
            <person name="Nelson D."/>
            <person name="Wang X."/>
            <person name="Bowers J.E."/>
            <person name="Gschwend A.R."/>
            <person name="Delcher A.L."/>
            <person name="Singh R."/>
            <person name="Suzuki J.Y."/>
            <person name="Tripathi S."/>
            <person name="Neupane K."/>
            <person name="Wei H."/>
            <person name="Irikura B."/>
            <person name="Paidi M."/>
            <person name="Jiang N."/>
            <person name="Zhang W."/>
            <person name="Presting G."/>
            <person name="Windsor A."/>
            <person name="Navajas-Perez R."/>
            <person name="Torres M.J."/>
            <person name="Feltus F.A."/>
            <person name="Porter B."/>
            <person name="Li Y."/>
            <person name="Burroughs A.M."/>
            <person name="Luo M.C."/>
            <person name="Liu L."/>
            <person name="Christopher D.A."/>
            <person name="Mount S.M."/>
            <person name="Moore P.H."/>
            <person name="Sugimura T."/>
            <person name="Jiang J."/>
            <person name="Schuler M.A."/>
            <person name="Friedman V."/>
            <person name="Mitchell-Olds T."/>
            <person name="Shippen D.E."/>
            <person name="dePamphilis C.W."/>
            <person name="Palmer J.D."/>
            <person name="Freeling M."/>
            <person name="Paterson A.H."/>
            <person name="Gonsalves D."/>
            <person name="Wang L."/>
            <person name="Alam M."/>
        </authorList>
    </citation>
    <scope>NUCLEOTIDE SEQUENCE [LARGE SCALE GENOMIC DNA]</scope>
    <source>
        <strain>cv. SunUp</strain>
    </source>
</reference>
<protein>
    <recommendedName>
        <fullName evidence="1">ATP synthase subunit beta, chloroplastic</fullName>
        <ecNumber evidence="1">7.1.2.2</ecNumber>
    </recommendedName>
    <alternativeName>
        <fullName evidence="1">ATP synthase F1 sector subunit beta</fullName>
    </alternativeName>
    <alternativeName>
        <fullName evidence="1">F-ATPase subunit beta</fullName>
    </alternativeName>
</protein>
<comment type="function">
    <text evidence="1">Produces ATP from ADP in the presence of a proton gradient across the membrane. The catalytic sites are hosted primarily by the beta subunits.</text>
</comment>
<comment type="catalytic activity">
    <reaction evidence="1">
        <text>ATP + H2O + 4 H(+)(in) = ADP + phosphate + 5 H(+)(out)</text>
        <dbReference type="Rhea" id="RHEA:57720"/>
        <dbReference type="ChEBI" id="CHEBI:15377"/>
        <dbReference type="ChEBI" id="CHEBI:15378"/>
        <dbReference type="ChEBI" id="CHEBI:30616"/>
        <dbReference type="ChEBI" id="CHEBI:43474"/>
        <dbReference type="ChEBI" id="CHEBI:456216"/>
        <dbReference type="EC" id="7.1.2.2"/>
    </reaction>
</comment>
<comment type="subunit">
    <text evidence="1">F-type ATPases have 2 components, CF(1) - the catalytic core - and CF(0) - the membrane proton channel. CF(1) has five subunits: alpha(3), beta(3), gamma(1), delta(1), epsilon(1). CF(0) has four main subunits: a(1), b(1), b'(1) and c(9-12).</text>
</comment>
<comment type="subcellular location">
    <subcellularLocation>
        <location evidence="1">Plastid</location>
        <location evidence="1">Chloroplast thylakoid membrane</location>
        <topology evidence="1">Peripheral membrane protein</topology>
    </subcellularLocation>
</comment>
<comment type="similarity">
    <text evidence="1">Belongs to the ATPase alpha/beta chains family.</text>
</comment>